<organism>
    <name type="scientific">Nandina domestica</name>
    <name type="common">Heavenly bamboo</name>
    <dbReference type="NCBI Taxonomy" id="41776"/>
    <lineage>
        <taxon>Eukaryota</taxon>
        <taxon>Viridiplantae</taxon>
        <taxon>Streptophyta</taxon>
        <taxon>Embryophyta</taxon>
        <taxon>Tracheophyta</taxon>
        <taxon>Spermatophyta</taxon>
        <taxon>Magnoliopsida</taxon>
        <taxon>Ranunculales</taxon>
        <taxon>Berberidaceae</taxon>
        <taxon>Nandinoideae</taxon>
        <taxon>Nandineae</taxon>
        <taxon>Nandina</taxon>
    </lineage>
</organism>
<dbReference type="EMBL" id="DQ923117">
    <property type="protein sequence ID" value="ABI49852.1"/>
    <property type="molecule type" value="Genomic_DNA"/>
</dbReference>
<dbReference type="RefSeq" id="YP_740639.1">
    <property type="nucleotide sequence ID" value="NC_008336.1"/>
</dbReference>
<dbReference type="SMR" id="Q09FX2"/>
<dbReference type="GeneID" id="4271569"/>
<dbReference type="GO" id="GO:0009507">
    <property type="term" value="C:chloroplast"/>
    <property type="evidence" value="ECO:0007669"/>
    <property type="project" value="UniProtKB-SubCell"/>
</dbReference>
<dbReference type="GO" id="GO:0005763">
    <property type="term" value="C:mitochondrial small ribosomal subunit"/>
    <property type="evidence" value="ECO:0007669"/>
    <property type="project" value="TreeGrafter"/>
</dbReference>
<dbReference type="GO" id="GO:0003735">
    <property type="term" value="F:structural constituent of ribosome"/>
    <property type="evidence" value="ECO:0007669"/>
    <property type="project" value="InterPro"/>
</dbReference>
<dbReference type="GO" id="GO:0006412">
    <property type="term" value="P:translation"/>
    <property type="evidence" value="ECO:0007669"/>
    <property type="project" value="UniProtKB-UniRule"/>
</dbReference>
<dbReference type="CDD" id="cd01425">
    <property type="entry name" value="RPS2"/>
    <property type="match status" value="1"/>
</dbReference>
<dbReference type="FunFam" id="3.40.50.10490:FF:000101">
    <property type="match status" value="1"/>
</dbReference>
<dbReference type="FunFam" id="1.10.287.610:FF:000001">
    <property type="entry name" value="30S ribosomal protein S2"/>
    <property type="match status" value="1"/>
</dbReference>
<dbReference type="Gene3D" id="3.40.50.10490">
    <property type="entry name" value="Glucose-6-phosphate isomerase like protein, domain 1"/>
    <property type="match status" value="1"/>
</dbReference>
<dbReference type="Gene3D" id="1.10.287.610">
    <property type="entry name" value="Helix hairpin bin"/>
    <property type="match status" value="1"/>
</dbReference>
<dbReference type="HAMAP" id="MF_00291_B">
    <property type="entry name" value="Ribosomal_uS2_B"/>
    <property type="match status" value="1"/>
</dbReference>
<dbReference type="InterPro" id="IPR001865">
    <property type="entry name" value="Ribosomal_uS2"/>
</dbReference>
<dbReference type="InterPro" id="IPR005706">
    <property type="entry name" value="Ribosomal_uS2_bac/mit/plastid"/>
</dbReference>
<dbReference type="InterPro" id="IPR018130">
    <property type="entry name" value="Ribosomal_uS2_CS"/>
</dbReference>
<dbReference type="InterPro" id="IPR023591">
    <property type="entry name" value="Ribosomal_uS2_flav_dom_sf"/>
</dbReference>
<dbReference type="NCBIfam" id="TIGR01011">
    <property type="entry name" value="rpsB_bact"/>
    <property type="match status" value="1"/>
</dbReference>
<dbReference type="PANTHER" id="PTHR12534">
    <property type="entry name" value="30S RIBOSOMAL PROTEIN S2 PROKARYOTIC AND ORGANELLAR"/>
    <property type="match status" value="1"/>
</dbReference>
<dbReference type="PANTHER" id="PTHR12534:SF0">
    <property type="entry name" value="SMALL RIBOSOMAL SUBUNIT PROTEIN US2M"/>
    <property type="match status" value="1"/>
</dbReference>
<dbReference type="Pfam" id="PF00318">
    <property type="entry name" value="Ribosomal_S2"/>
    <property type="match status" value="1"/>
</dbReference>
<dbReference type="PRINTS" id="PR00395">
    <property type="entry name" value="RIBOSOMALS2"/>
</dbReference>
<dbReference type="SUPFAM" id="SSF52313">
    <property type="entry name" value="Ribosomal protein S2"/>
    <property type="match status" value="1"/>
</dbReference>
<dbReference type="PROSITE" id="PS00962">
    <property type="entry name" value="RIBOSOMAL_S2_1"/>
    <property type="match status" value="1"/>
</dbReference>
<dbReference type="PROSITE" id="PS00963">
    <property type="entry name" value="RIBOSOMAL_S2_2"/>
    <property type="match status" value="1"/>
</dbReference>
<proteinExistence type="inferred from homology"/>
<keyword id="KW-0150">Chloroplast</keyword>
<keyword id="KW-0934">Plastid</keyword>
<keyword id="KW-0687">Ribonucleoprotein</keyword>
<keyword id="KW-0689">Ribosomal protein</keyword>
<sequence>MTRRYWNINLEEMMEAGVHFGHGTRKWNPRMAPYISAKRKGIHITNLTRTARFLSEACDLVFDAASRGKQFLIVGTKNKAADSVASAAIRARCHYVNKKWLGGMSTNWSTTETRLHKFRDLRAEQKTGRFNRLPKRDAAMLKRQLSHLQTYLGGIKYMTGLPDIVIIVDQQEEYTALRECVTLGIPTICLIDTNCDPDLADISIPANDDAIASIRFILNKLVSAICEGRSSYIRNR</sequence>
<evidence type="ECO:0000305" key="1"/>
<name>RR2_NANDO</name>
<comment type="subcellular location">
    <subcellularLocation>
        <location>Plastid</location>
        <location>Chloroplast</location>
    </subcellularLocation>
</comment>
<comment type="similarity">
    <text evidence="1">Belongs to the universal ribosomal protein uS2 family.</text>
</comment>
<protein>
    <recommendedName>
        <fullName evidence="1">Small ribosomal subunit protein uS2c</fullName>
    </recommendedName>
    <alternativeName>
        <fullName>30S ribosomal protein S2, chloroplastic</fullName>
    </alternativeName>
</protein>
<gene>
    <name type="primary">rps2</name>
</gene>
<feature type="chain" id="PRO_0000352132" description="Small ribosomal subunit protein uS2c">
    <location>
        <begin position="1"/>
        <end position="236"/>
    </location>
</feature>
<accession>Q09FX2</accession>
<reference key="1">
    <citation type="journal article" date="2006" name="BMC Plant Biol.">
        <title>Rapid and accurate pyrosequencing of angiosperm plastid genomes.</title>
        <authorList>
            <person name="Moore M.J."/>
            <person name="Dhingra A."/>
            <person name="Soltis P.S."/>
            <person name="Shaw R."/>
            <person name="Farmerie W.G."/>
            <person name="Folta K.M."/>
            <person name="Soltis D.E."/>
        </authorList>
    </citation>
    <scope>NUCLEOTIDE SEQUENCE [LARGE SCALE GENOMIC DNA]</scope>
</reference>
<geneLocation type="chloroplast"/>